<feature type="chain" id="PRO_0000364666" description="Fructose-1,6-bisphosphatase class 1 1">
    <location>
        <begin position="1"/>
        <end position="333"/>
    </location>
</feature>
<feature type="binding site" evidence="1">
    <location>
        <position position="81"/>
    </location>
    <ligand>
        <name>Mg(2+)</name>
        <dbReference type="ChEBI" id="CHEBI:18420"/>
        <label>1</label>
    </ligand>
</feature>
<feature type="binding site" evidence="1">
    <location>
        <position position="100"/>
    </location>
    <ligand>
        <name>Mg(2+)</name>
        <dbReference type="ChEBI" id="CHEBI:18420"/>
        <label>1</label>
    </ligand>
</feature>
<feature type="binding site" evidence="1">
    <location>
        <position position="100"/>
    </location>
    <ligand>
        <name>Mg(2+)</name>
        <dbReference type="ChEBI" id="CHEBI:18420"/>
        <label>2</label>
    </ligand>
</feature>
<feature type="binding site" evidence="1">
    <location>
        <position position="102"/>
    </location>
    <ligand>
        <name>Mg(2+)</name>
        <dbReference type="ChEBI" id="CHEBI:18420"/>
        <label>1</label>
    </ligand>
</feature>
<feature type="binding site" evidence="1">
    <location>
        <begin position="103"/>
        <end position="106"/>
    </location>
    <ligand>
        <name>substrate</name>
    </ligand>
</feature>
<feature type="binding site" evidence="1">
    <location>
        <position position="103"/>
    </location>
    <ligand>
        <name>Mg(2+)</name>
        <dbReference type="ChEBI" id="CHEBI:18420"/>
        <label>2</label>
    </ligand>
</feature>
<feature type="binding site" evidence="1">
    <location>
        <position position="191"/>
    </location>
    <ligand>
        <name>substrate</name>
    </ligand>
</feature>
<feature type="binding site" evidence="1">
    <location>
        <position position="263"/>
    </location>
    <ligand>
        <name>Mg(2+)</name>
        <dbReference type="ChEBI" id="CHEBI:18420"/>
        <label>2</label>
    </ligand>
</feature>
<name>F16A1_CERS4</name>
<keyword id="KW-0113">Calvin cycle</keyword>
<keyword id="KW-0119">Carbohydrate metabolism</keyword>
<keyword id="KW-0963">Cytoplasm</keyword>
<keyword id="KW-0378">Hydrolase</keyword>
<keyword id="KW-0460">Magnesium</keyword>
<keyword id="KW-0479">Metal-binding</keyword>
<keyword id="KW-1185">Reference proteome</keyword>
<reference key="1">
    <citation type="submission" date="2005-09" db="EMBL/GenBank/DDBJ databases">
        <title>Complete sequence of chromosome 1 of Rhodobacter sphaeroides 2.4.1.</title>
        <authorList>
            <person name="Copeland A."/>
            <person name="Lucas S."/>
            <person name="Lapidus A."/>
            <person name="Barry K."/>
            <person name="Detter J.C."/>
            <person name="Glavina T."/>
            <person name="Hammon N."/>
            <person name="Israni S."/>
            <person name="Pitluck S."/>
            <person name="Richardson P."/>
            <person name="Mackenzie C."/>
            <person name="Choudhary M."/>
            <person name="Larimer F."/>
            <person name="Hauser L.J."/>
            <person name="Land M."/>
            <person name="Donohue T.J."/>
            <person name="Kaplan S."/>
        </authorList>
    </citation>
    <scope>NUCLEOTIDE SEQUENCE [LARGE SCALE GENOMIC DNA]</scope>
    <source>
        <strain>ATCC 17023 / DSM 158 / JCM 6121 / CCUG 31486 / LMG 2827 / NBRC 12203 / NCIMB 8253 / ATH 2.4.1.</strain>
    </source>
</reference>
<gene>
    <name evidence="1" type="primary">fbp1</name>
    <name type="ordered locus">RHOS4_28970</name>
    <name type="ORF">RSP_1285</name>
</gene>
<evidence type="ECO:0000255" key="1">
    <source>
        <dbReference type="HAMAP-Rule" id="MF_01855"/>
    </source>
</evidence>
<comment type="catalytic activity">
    <reaction evidence="1">
        <text>beta-D-fructose 1,6-bisphosphate + H2O = beta-D-fructose 6-phosphate + phosphate</text>
        <dbReference type="Rhea" id="RHEA:11064"/>
        <dbReference type="ChEBI" id="CHEBI:15377"/>
        <dbReference type="ChEBI" id="CHEBI:32966"/>
        <dbReference type="ChEBI" id="CHEBI:43474"/>
        <dbReference type="ChEBI" id="CHEBI:57634"/>
        <dbReference type="EC" id="3.1.3.11"/>
    </reaction>
</comment>
<comment type="cofactor">
    <cofactor evidence="1">
        <name>Mg(2+)</name>
        <dbReference type="ChEBI" id="CHEBI:18420"/>
    </cofactor>
    <text evidence="1">Binds 2 magnesium ions per subunit.</text>
</comment>
<comment type="pathway">
    <text evidence="1">Carbohydrate biosynthesis; Calvin cycle.</text>
</comment>
<comment type="subunit">
    <text evidence="1">Homotetramer.</text>
</comment>
<comment type="subcellular location">
    <subcellularLocation>
        <location evidence="1">Cytoplasm</location>
    </subcellularLocation>
</comment>
<comment type="similarity">
    <text evidence="1">Belongs to the FBPase class 1 family.</text>
</comment>
<protein>
    <recommendedName>
        <fullName evidence="1">Fructose-1,6-bisphosphatase class 1 1</fullName>
        <shortName evidence="1">FBPase class 1 1</shortName>
        <ecNumber evidence="1">3.1.3.11</ecNumber>
    </recommendedName>
    <alternativeName>
        <fullName evidence="1">D-fructose-1,6-bisphosphate 1-phosphohydrolase class 1 1</fullName>
    </alternativeName>
</protein>
<accession>Q3IYB9</accession>
<dbReference type="EC" id="3.1.3.11" evidence="1"/>
<dbReference type="EMBL" id="CP000143">
    <property type="protein sequence ID" value="ABA80465.1"/>
    <property type="molecule type" value="Genomic_DNA"/>
</dbReference>
<dbReference type="RefSeq" id="YP_354366.1">
    <property type="nucleotide sequence ID" value="NC_007493.2"/>
</dbReference>
<dbReference type="SMR" id="Q3IYB9"/>
<dbReference type="STRING" id="272943.RSP_1285"/>
<dbReference type="EnsemblBacteria" id="ABA80465">
    <property type="protein sequence ID" value="ABA80465"/>
    <property type="gene ID" value="RSP_1285"/>
</dbReference>
<dbReference type="KEGG" id="rsp:RSP_1285"/>
<dbReference type="PATRIC" id="fig|272943.9.peg.3266"/>
<dbReference type="eggNOG" id="COG0158">
    <property type="taxonomic scope" value="Bacteria"/>
</dbReference>
<dbReference type="OrthoDB" id="9806756at2"/>
<dbReference type="PhylomeDB" id="Q3IYB9"/>
<dbReference type="UniPathway" id="UPA00116"/>
<dbReference type="Proteomes" id="UP000002703">
    <property type="component" value="Chromosome 1"/>
</dbReference>
<dbReference type="GO" id="GO:0005829">
    <property type="term" value="C:cytosol"/>
    <property type="evidence" value="ECO:0007669"/>
    <property type="project" value="TreeGrafter"/>
</dbReference>
<dbReference type="GO" id="GO:0042132">
    <property type="term" value="F:fructose 1,6-bisphosphate 1-phosphatase activity"/>
    <property type="evidence" value="ECO:0007669"/>
    <property type="project" value="UniProtKB-UniRule"/>
</dbReference>
<dbReference type="GO" id="GO:0000287">
    <property type="term" value="F:magnesium ion binding"/>
    <property type="evidence" value="ECO:0007669"/>
    <property type="project" value="UniProtKB-UniRule"/>
</dbReference>
<dbReference type="GO" id="GO:0030388">
    <property type="term" value="P:fructose 1,6-bisphosphate metabolic process"/>
    <property type="evidence" value="ECO:0007669"/>
    <property type="project" value="TreeGrafter"/>
</dbReference>
<dbReference type="GO" id="GO:0006002">
    <property type="term" value="P:fructose 6-phosphate metabolic process"/>
    <property type="evidence" value="ECO:0007669"/>
    <property type="project" value="TreeGrafter"/>
</dbReference>
<dbReference type="GO" id="GO:0006000">
    <property type="term" value="P:fructose metabolic process"/>
    <property type="evidence" value="ECO:0007669"/>
    <property type="project" value="TreeGrafter"/>
</dbReference>
<dbReference type="GO" id="GO:0006094">
    <property type="term" value="P:gluconeogenesis"/>
    <property type="evidence" value="ECO:0007669"/>
    <property type="project" value="UniProtKB-UniRule"/>
</dbReference>
<dbReference type="GO" id="GO:0019253">
    <property type="term" value="P:reductive pentose-phosphate cycle"/>
    <property type="evidence" value="ECO:0007669"/>
    <property type="project" value="UniProtKB-UniRule"/>
</dbReference>
<dbReference type="GO" id="GO:0005986">
    <property type="term" value="P:sucrose biosynthetic process"/>
    <property type="evidence" value="ECO:0007669"/>
    <property type="project" value="TreeGrafter"/>
</dbReference>
<dbReference type="CDD" id="cd00354">
    <property type="entry name" value="FBPase"/>
    <property type="match status" value="1"/>
</dbReference>
<dbReference type="FunFam" id="3.40.190.80:FF:000011">
    <property type="entry name" value="Fructose-1,6-bisphosphatase class 1"/>
    <property type="match status" value="1"/>
</dbReference>
<dbReference type="Gene3D" id="3.40.190.80">
    <property type="match status" value="1"/>
</dbReference>
<dbReference type="Gene3D" id="3.30.540.10">
    <property type="entry name" value="Fructose-1,6-Bisphosphatase, subunit A, domain 1"/>
    <property type="match status" value="1"/>
</dbReference>
<dbReference type="HAMAP" id="MF_01855">
    <property type="entry name" value="FBPase_class1"/>
    <property type="match status" value="1"/>
</dbReference>
<dbReference type="InterPro" id="IPR044015">
    <property type="entry name" value="FBPase_C_dom"/>
</dbReference>
<dbReference type="InterPro" id="IPR000146">
    <property type="entry name" value="FBPase_class-1"/>
</dbReference>
<dbReference type="InterPro" id="IPR033391">
    <property type="entry name" value="FBPase_N"/>
</dbReference>
<dbReference type="InterPro" id="IPR028343">
    <property type="entry name" value="FBPtase"/>
</dbReference>
<dbReference type="InterPro" id="IPR020548">
    <property type="entry name" value="Fructose_bisphosphatase_AS"/>
</dbReference>
<dbReference type="NCBIfam" id="NF006780">
    <property type="entry name" value="PRK09293.1-4"/>
    <property type="match status" value="1"/>
</dbReference>
<dbReference type="PANTHER" id="PTHR11556">
    <property type="entry name" value="FRUCTOSE-1,6-BISPHOSPHATASE-RELATED"/>
    <property type="match status" value="1"/>
</dbReference>
<dbReference type="PANTHER" id="PTHR11556:SF35">
    <property type="entry name" value="SEDOHEPTULOSE-1,7-BISPHOSPHATASE, CHLOROPLASTIC"/>
    <property type="match status" value="1"/>
</dbReference>
<dbReference type="Pfam" id="PF00316">
    <property type="entry name" value="FBPase"/>
    <property type="match status" value="1"/>
</dbReference>
<dbReference type="Pfam" id="PF18913">
    <property type="entry name" value="FBPase_C"/>
    <property type="match status" value="1"/>
</dbReference>
<dbReference type="PIRSF" id="PIRSF500210">
    <property type="entry name" value="FBPtase"/>
    <property type="match status" value="1"/>
</dbReference>
<dbReference type="PIRSF" id="PIRSF000904">
    <property type="entry name" value="FBPtase_SBPase"/>
    <property type="match status" value="1"/>
</dbReference>
<dbReference type="PRINTS" id="PR00115">
    <property type="entry name" value="F16BPHPHTASE"/>
</dbReference>
<dbReference type="SUPFAM" id="SSF56655">
    <property type="entry name" value="Carbohydrate phosphatase"/>
    <property type="match status" value="1"/>
</dbReference>
<dbReference type="PROSITE" id="PS00124">
    <property type="entry name" value="FBPASE"/>
    <property type="match status" value="1"/>
</dbReference>
<proteinExistence type="inferred from homology"/>
<organism>
    <name type="scientific">Cereibacter sphaeroides (strain ATCC 17023 / DSM 158 / JCM 6121 / CCUG 31486 / LMG 2827 / NBRC 12203 / NCIMB 8253 / ATH 2.4.1.)</name>
    <name type="common">Rhodobacter sphaeroides</name>
    <dbReference type="NCBI Taxonomy" id="272943"/>
    <lineage>
        <taxon>Bacteria</taxon>
        <taxon>Pseudomonadati</taxon>
        <taxon>Pseudomonadota</taxon>
        <taxon>Alphaproteobacteria</taxon>
        <taxon>Rhodobacterales</taxon>
        <taxon>Paracoccaceae</taxon>
        <taxon>Cereibacter</taxon>
    </lineage>
</organism>
<sequence>MKPFPTHPDAIPAELQDVMDRLGSVAIEVANRIARGGIDEDLAGLCGTNTDGDGQKALDVIADDAFRVALEGSAVRFYASEEQDTAVTLNEAGTLALAIDPLDGSSNIDTNLSVGTIFAIWPAAATAEASFLRLGSELIAAGYVIYGPQVCMMVSFGKGTQKYVLDPGSRSFVLVDRAVKVPPSSTEFAINASNYRHWPKPIRAYIDDCVAGTEGPRGRNFNMRWLASLVAETHRILARGGVFLYPRDSRKGYEQGRLRYLYECAPIAFVITQAGGGATDGENPILGQTPSRLHARTPFVFGSAEKVARITAYHDLPEQETSALFGNRGLFRS</sequence>